<gene>
    <name evidence="1" type="primary">ackA</name>
    <name type="ordered locus">CBO2458</name>
    <name type="ordered locus">CLC_2308</name>
</gene>
<reference key="1">
    <citation type="journal article" date="2007" name="Genome Res.">
        <title>Genome sequence of a proteolytic (Group I) Clostridium botulinum strain Hall A and comparative analysis of the clostridial genomes.</title>
        <authorList>
            <person name="Sebaihia M."/>
            <person name="Peck M.W."/>
            <person name="Minton N.P."/>
            <person name="Thomson N.R."/>
            <person name="Holden M.T.G."/>
            <person name="Mitchell W.J."/>
            <person name="Carter A.T."/>
            <person name="Bentley S.D."/>
            <person name="Mason D.R."/>
            <person name="Crossman L."/>
            <person name="Paul C.J."/>
            <person name="Ivens A."/>
            <person name="Wells-Bennik M.H.J."/>
            <person name="Davis I.J."/>
            <person name="Cerdeno-Tarraga A.M."/>
            <person name="Churcher C."/>
            <person name="Quail M.A."/>
            <person name="Chillingworth T."/>
            <person name="Feltwell T."/>
            <person name="Fraser A."/>
            <person name="Goodhead I."/>
            <person name="Hance Z."/>
            <person name="Jagels K."/>
            <person name="Larke N."/>
            <person name="Maddison M."/>
            <person name="Moule S."/>
            <person name="Mungall K."/>
            <person name="Norbertczak H."/>
            <person name="Rabbinowitsch E."/>
            <person name="Sanders M."/>
            <person name="Simmonds M."/>
            <person name="White B."/>
            <person name="Whithead S."/>
            <person name="Parkhill J."/>
        </authorList>
    </citation>
    <scope>NUCLEOTIDE SEQUENCE [LARGE SCALE GENOMIC DNA]</scope>
    <source>
        <strain>Hall / ATCC 3502 / NCTC 13319 / Type A</strain>
    </source>
</reference>
<reference key="2">
    <citation type="journal article" date="2007" name="PLoS ONE">
        <title>Analysis of the neurotoxin complex genes in Clostridium botulinum A1-A4 and B1 strains: BoNT/A3, /Ba4 and /B1 clusters are located within plasmids.</title>
        <authorList>
            <person name="Smith T.J."/>
            <person name="Hill K.K."/>
            <person name="Foley B.T."/>
            <person name="Detter J.C."/>
            <person name="Munk A.C."/>
            <person name="Bruce D.C."/>
            <person name="Doggett N.A."/>
            <person name="Smith L.A."/>
            <person name="Marks J.D."/>
            <person name="Xie G."/>
            <person name="Brettin T.S."/>
        </authorList>
    </citation>
    <scope>NUCLEOTIDE SEQUENCE [LARGE SCALE GENOMIC DNA]</scope>
    <source>
        <strain>Hall / ATCC 3502 / NCTC 13319 / Type A</strain>
    </source>
</reference>
<evidence type="ECO:0000255" key="1">
    <source>
        <dbReference type="HAMAP-Rule" id="MF_00020"/>
    </source>
</evidence>
<proteinExistence type="inferred from homology"/>
<organism>
    <name type="scientific">Clostridium botulinum (strain Hall / ATCC 3502 / NCTC 13319 / Type A)</name>
    <dbReference type="NCBI Taxonomy" id="441771"/>
    <lineage>
        <taxon>Bacteria</taxon>
        <taxon>Bacillati</taxon>
        <taxon>Bacillota</taxon>
        <taxon>Clostridia</taxon>
        <taxon>Eubacteriales</taxon>
        <taxon>Clostridiaceae</taxon>
        <taxon>Clostridium</taxon>
    </lineage>
</organism>
<protein>
    <recommendedName>
        <fullName evidence="1">Acetate kinase</fullName>
        <ecNumber evidence="1">2.7.2.1</ecNumber>
    </recommendedName>
    <alternativeName>
        <fullName evidence="1">Acetokinase</fullName>
    </alternativeName>
</protein>
<comment type="function">
    <text evidence="1">Catalyzes the formation of acetyl phosphate from acetate and ATP. Can also catalyze the reverse reaction.</text>
</comment>
<comment type="catalytic activity">
    <reaction evidence="1">
        <text>acetate + ATP = acetyl phosphate + ADP</text>
        <dbReference type="Rhea" id="RHEA:11352"/>
        <dbReference type="ChEBI" id="CHEBI:22191"/>
        <dbReference type="ChEBI" id="CHEBI:30089"/>
        <dbReference type="ChEBI" id="CHEBI:30616"/>
        <dbReference type="ChEBI" id="CHEBI:456216"/>
        <dbReference type="EC" id="2.7.2.1"/>
    </reaction>
</comment>
<comment type="cofactor">
    <cofactor evidence="1">
        <name>Mg(2+)</name>
        <dbReference type="ChEBI" id="CHEBI:18420"/>
    </cofactor>
    <cofactor evidence="1">
        <name>Mn(2+)</name>
        <dbReference type="ChEBI" id="CHEBI:29035"/>
    </cofactor>
    <text evidence="1">Mg(2+). Can also accept Mn(2+).</text>
</comment>
<comment type="pathway">
    <text evidence="1">Metabolic intermediate biosynthesis; acetyl-CoA biosynthesis; acetyl-CoA from acetate: step 1/2.</text>
</comment>
<comment type="subunit">
    <text evidence="1">Homodimer.</text>
</comment>
<comment type="subcellular location">
    <subcellularLocation>
        <location evidence="1">Cytoplasm</location>
    </subcellularLocation>
</comment>
<comment type="similarity">
    <text evidence="1">Belongs to the acetokinase family.</text>
</comment>
<name>ACKA_CLOBH</name>
<keyword id="KW-0067">ATP-binding</keyword>
<keyword id="KW-0963">Cytoplasm</keyword>
<keyword id="KW-0418">Kinase</keyword>
<keyword id="KW-0460">Magnesium</keyword>
<keyword id="KW-0479">Metal-binding</keyword>
<keyword id="KW-0547">Nucleotide-binding</keyword>
<keyword id="KW-1185">Reference proteome</keyword>
<keyword id="KW-0808">Transferase</keyword>
<accession>A5I4N7</accession>
<accession>A7G5T7</accession>
<sequence length="397" mass="43430">MKILVVNCGSSSLKYQLIDMTSEEALAKGLVERIGIEGSILTQKVNGEKYIIEEPMKDHKKAIELVLKALVDKEHGVISDMSEIAAVGHRVVHGGEKYASSVLINDEVMKALEDCVKLAPLHNPPNIIGINACRELMPKTPMVAVFDTAFHQTLPDYAYMYPLPYELYEQNGIRKYGFHGTSHRYVSSVASEMMGKDLKDLKVITCHLGNGASLCAVKEGKSVETSMGFTPLAGLAMGTRCGDIDPAILLFMERELKMSPDEVDTVINKKSGVLGISGVSSDFRDIEGAAEEGNKRAKLALDVYHYTVRQTIGAYTAVLNGVDAIVFTAGLGENSAASREEILNGLEYLGIKIDAEKNKQRGKQIEISTEDSKVKVFVIPTDEELMIARDTKEITVK</sequence>
<feature type="chain" id="PRO_1000002221" description="Acetate kinase">
    <location>
        <begin position="1"/>
        <end position="397"/>
    </location>
</feature>
<feature type="active site" description="Proton donor/acceptor" evidence="1">
    <location>
        <position position="147"/>
    </location>
</feature>
<feature type="binding site" evidence="1">
    <location>
        <position position="7"/>
    </location>
    <ligand>
        <name>Mg(2+)</name>
        <dbReference type="ChEBI" id="CHEBI:18420"/>
    </ligand>
</feature>
<feature type="binding site" evidence="1">
    <location>
        <position position="14"/>
    </location>
    <ligand>
        <name>ATP</name>
        <dbReference type="ChEBI" id="CHEBI:30616"/>
    </ligand>
</feature>
<feature type="binding site" evidence="1">
    <location>
        <position position="90"/>
    </location>
    <ligand>
        <name>substrate</name>
    </ligand>
</feature>
<feature type="binding site" evidence="1">
    <location>
        <begin position="207"/>
        <end position="211"/>
    </location>
    <ligand>
        <name>ATP</name>
        <dbReference type="ChEBI" id="CHEBI:30616"/>
    </ligand>
</feature>
<feature type="binding site" evidence="1">
    <location>
        <begin position="282"/>
        <end position="284"/>
    </location>
    <ligand>
        <name>ATP</name>
        <dbReference type="ChEBI" id="CHEBI:30616"/>
    </ligand>
</feature>
<feature type="binding site" evidence="1">
    <location>
        <begin position="330"/>
        <end position="334"/>
    </location>
    <ligand>
        <name>ATP</name>
        <dbReference type="ChEBI" id="CHEBI:30616"/>
    </ligand>
</feature>
<feature type="binding site" evidence="1">
    <location>
        <position position="383"/>
    </location>
    <ligand>
        <name>Mg(2+)</name>
        <dbReference type="ChEBI" id="CHEBI:18420"/>
    </ligand>
</feature>
<feature type="site" description="Transition state stabilizer" evidence="1">
    <location>
        <position position="179"/>
    </location>
</feature>
<feature type="site" description="Transition state stabilizer" evidence="1">
    <location>
        <position position="240"/>
    </location>
</feature>
<dbReference type="EC" id="2.7.2.1" evidence="1"/>
<dbReference type="EMBL" id="CP000727">
    <property type="protein sequence ID" value="ABS37677.1"/>
    <property type="molecule type" value="Genomic_DNA"/>
</dbReference>
<dbReference type="EMBL" id="AM412317">
    <property type="protein sequence ID" value="CAL84009.1"/>
    <property type="molecule type" value="Genomic_DNA"/>
</dbReference>
<dbReference type="RefSeq" id="WP_011986808.1">
    <property type="nucleotide sequence ID" value="NC_009698.1"/>
</dbReference>
<dbReference type="RefSeq" id="YP_001254957.1">
    <property type="nucleotide sequence ID" value="NC_009495.1"/>
</dbReference>
<dbReference type="RefSeq" id="YP_001388152.1">
    <property type="nucleotide sequence ID" value="NC_009698.1"/>
</dbReference>
<dbReference type="SMR" id="A5I4N7"/>
<dbReference type="GeneID" id="5186713"/>
<dbReference type="KEGG" id="cbh:CLC_2308"/>
<dbReference type="KEGG" id="cbo:CBO2458"/>
<dbReference type="PATRIC" id="fig|413999.7.peg.2436"/>
<dbReference type="HOGENOM" id="CLU_020352_0_1_9"/>
<dbReference type="UniPathway" id="UPA00340">
    <property type="reaction ID" value="UER00458"/>
</dbReference>
<dbReference type="PRO" id="PR:A5I4N7"/>
<dbReference type="Proteomes" id="UP000001986">
    <property type="component" value="Chromosome"/>
</dbReference>
<dbReference type="GO" id="GO:0005737">
    <property type="term" value="C:cytoplasm"/>
    <property type="evidence" value="ECO:0007669"/>
    <property type="project" value="UniProtKB-SubCell"/>
</dbReference>
<dbReference type="GO" id="GO:0008776">
    <property type="term" value="F:acetate kinase activity"/>
    <property type="evidence" value="ECO:0000318"/>
    <property type="project" value="GO_Central"/>
</dbReference>
<dbReference type="GO" id="GO:0005524">
    <property type="term" value="F:ATP binding"/>
    <property type="evidence" value="ECO:0007669"/>
    <property type="project" value="UniProtKB-KW"/>
</dbReference>
<dbReference type="GO" id="GO:0000287">
    <property type="term" value="F:magnesium ion binding"/>
    <property type="evidence" value="ECO:0007669"/>
    <property type="project" value="UniProtKB-UniRule"/>
</dbReference>
<dbReference type="GO" id="GO:0006083">
    <property type="term" value="P:acetate metabolic process"/>
    <property type="evidence" value="ECO:0000318"/>
    <property type="project" value="GO_Central"/>
</dbReference>
<dbReference type="GO" id="GO:0006085">
    <property type="term" value="P:acetyl-CoA biosynthetic process"/>
    <property type="evidence" value="ECO:0007669"/>
    <property type="project" value="UniProtKB-UniRule"/>
</dbReference>
<dbReference type="CDD" id="cd24010">
    <property type="entry name" value="ASKHA_NBD_AcK_PK"/>
    <property type="match status" value="1"/>
</dbReference>
<dbReference type="Gene3D" id="3.30.420.40">
    <property type="match status" value="2"/>
</dbReference>
<dbReference type="HAMAP" id="MF_00020">
    <property type="entry name" value="Acetate_kinase"/>
    <property type="match status" value="1"/>
</dbReference>
<dbReference type="InterPro" id="IPR004372">
    <property type="entry name" value="Ac/propionate_kinase"/>
</dbReference>
<dbReference type="InterPro" id="IPR000890">
    <property type="entry name" value="Aliphatic_acid_kin_short-chain"/>
</dbReference>
<dbReference type="InterPro" id="IPR023865">
    <property type="entry name" value="Aliphatic_acid_kinase_CS"/>
</dbReference>
<dbReference type="InterPro" id="IPR043129">
    <property type="entry name" value="ATPase_NBD"/>
</dbReference>
<dbReference type="NCBIfam" id="TIGR00016">
    <property type="entry name" value="ackA"/>
    <property type="match status" value="1"/>
</dbReference>
<dbReference type="PANTHER" id="PTHR21060">
    <property type="entry name" value="ACETATE KINASE"/>
    <property type="match status" value="1"/>
</dbReference>
<dbReference type="PANTHER" id="PTHR21060:SF15">
    <property type="entry name" value="ACETATE KINASE-RELATED"/>
    <property type="match status" value="1"/>
</dbReference>
<dbReference type="Pfam" id="PF00871">
    <property type="entry name" value="Acetate_kinase"/>
    <property type="match status" value="1"/>
</dbReference>
<dbReference type="PIRSF" id="PIRSF000722">
    <property type="entry name" value="Acetate_prop_kin"/>
    <property type="match status" value="1"/>
</dbReference>
<dbReference type="PRINTS" id="PR00471">
    <property type="entry name" value="ACETATEKNASE"/>
</dbReference>
<dbReference type="SUPFAM" id="SSF53067">
    <property type="entry name" value="Actin-like ATPase domain"/>
    <property type="match status" value="2"/>
</dbReference>
<dbReference type="PROSITE" id="PS01075">
    <property type="entry name" value="ACETATE_KINASE_1"/>
    <property type="match status" value="1"/>
</dbReference>
<dbReference type="PROSITE" id="PS01076">
    <property type="entry name" value="ACETATE_KINASE_2"/>
    <property type="match status" value="1"/>
</dbReference>